<name>YTHD2_HUMAN</name>
<protein>
    <recommendedName>
        <fullName evidence="37">YTH domain-containing family protein 2</fullName>
        <shortName evidence="33 34">DF2</shortName>
    </recommendedName>
    <alternativeName>
        <fullName evidence="36">CLL-associated antigen KW-14</fullName>
    </alternativeName>
    <alternativeName>
        <fullName evidence="35">High-glucose-regulated protein 8</fullName>
    </alternativeName>
    <alternativeName>
        <fullName evidence="30">Renal carcinoma antigen NY-REN-2</fullName>
    </alternativeName>
</protein>
<dbReference type="EMBL" id="AF155095">
    <property type="protein sequence ID" value="AAD42861.1"/>
    <property type="status" value="ALT_FRAME"/>
    <property type="molecule type" value="mRNA"/>
</dbReference>
<dbReference type="EMBL" id="AF192968">
    <property type="protein sequence ID" value="AAF08813.1"/>
    <property type="status" value="ALT_FRAME"/>
    <property type="molecule type" value="mRNA"/>
</dbReference>
<dbReference type="EMBL" id="AF432214">
    <property type="protein sequence ID" value="AAL99921.1"/>
    <property type="status" value="ALT_SEQ"/>
    <property type="molecule type" value="mRNA"/>
</dbReference>
<dbReference type="EMBL" id="AK292581">
    <property type="protein sequence ID" value="BAF85270.1"/>
    <property type="molecule type" value="mRNA"/>
</dbReference>
<dbReference type="EMBL" id="AK303833">
    <property type="protein sequence ID" value="BAG64779.1"/>
    <property type="molecule type" value="mRNA"/>
</dbReference>
<dbReference type="EMBL" id="AL645729">
    <property type="status" value="NOT_ANNOTATED_CDS"/>
    <property type="molecule type" value="Genomic_DNA"/>
</dbReference>
<dbReference type="EMBL" id="AL356786">
    <property type="status" value="NOT_ANNOTATED_CDS"/>
    <property type="molecule type" value="Genomic_DNA"/>
</dbReference>
<dbReference type="EMBL" id="CH471059">
    <property type="protein sequence ID" value="EAX07673.1"/>
    <property type="molecule type" value="Genomic_DNA"/>
</dbReference>
<dbReference type="EMBL" id="CH471059">
    <property type="protein sequence ID" value="EAX07675.1"/>
    <property type="molecule type" value="Genomic_DNA"/>
</dbReference>
<dbReference type="EMBL" id="CH471059">
    <property type="protein sequence ID" value="EAX07674.1"/>
    <property type="molecule type" value="Genomic_DNA"/>
</dbReference>
<dbReference type="EMBL" id="BC002559">
    <property type="protein sequence ID" value="AAH02559.1"/>
    <property type="molecule type" value="mRNA"/>
</dbReference>
<dbReference type="CCDS" id="CCDS41296.1">
    <molecule id="Q9Y5A9-1"/>
</dbReference>
<dbReference type="CCDS" id="CCDS53287.1">
    <molecule id="Q9Y5A9-2"/>
</dbReference>
<dbReference type="RefSeq" id="NP_001166299.1">
    <molecule id="Q9Y5A9-2"/>
    <property type="nucleotide sequence ID" value="NM_001172828.2"/>
</dbReference>
<dbReference type="RefSeq" id="NP_001166599.1">
    <molecule id="Q9Y5A9-1"/>
    <property type="nucleotide sequence ID" value="NM_001173128.2"/>
</dbReference>
<dbReference type="RefSeq" id="NP_057342.2">
    <molecule id="Q9Y5A9-1"/>
    <property type="nucleotide sequence ID" value="NM_016258.3"/>
</dbReference>
<dbReference type="PDB" id="4RDN">
    <property type="method" value="X-ray"/>
    <property type="resolution" value="2.10 A"/>
    <property type="chains" value="A/B=408-552"/>
</dbReference>
<dbReference type="PDB" id="4RDO">
    <property type="method" value="X-ray"/>
    <property type="resolution" value="2.15 A"/>
    <property type="chains" value="A/B/C/D/E/F=408-552"/>
</dbReference>
<dbReference type="PDB" id="4WQN">
    <property type="method" value="X-ray"/>
    <property type="resolution" value="2.12 A"/>
    <property type="chains" value="A/B=383-553"/>
</dbReference>
<dbReference type="PDB" id="7A1V">
    <property type="method" value="X-ray"/>
    <property type="resolution" value="2.20 A"/>
    <property type="chains" value="A/B=408-552"/>
</dbReference>
<dbReference type="PDB" id="7BIK">
    <property type="method" value="X-ray"/>
    <property type="resolution" value="2.10 A"/>
    <property type="chains" value="A/B=408-552"/>
</dbReference>
<dbReference type="PDB" id="7R5F">
    <property type="method" value="X-ray"/>
    <property type="resolution" value="2.00 A"/>
    <property type="chains" value="A/B=408-552"/>
</dbReference>
<dbReference type="PDB" id="7R5L">
    <property type="method" value="X-ray"/>
    <property type="resolution" value="1.70 A"/>
    <property type="chains" value="A=408-552"/>
</dbReference>
<dbReference type="PDB" id="7R5W">
    <property type="method" value="X-ray"/>
    <property type="resolution" value="1.75 A"/>
    <property type="chains" value="A/B=408-552"/>
</dbReference>
<dbReference type="PDB" id="7YWB">
    <property type="method" value="X-ray"/>
    <property type="resolution" value="1.92 A"/>
    <property type="chains" value="A/B=408-552"/>
</dbReference>
<dbReference type="PDB" id="7YX6">
    <property type="method" value="X-ray"/>
    <property type="resolution" value="1.80 A"/>
    <property type="chains" value="A/B=408-552"/>
</dbReference>
<dbReference type="PDB" id="7YXE">
    <property type="method" value="X-ray"/>
    <property type="resolution" value="1.85 A"/>
    <property type="chains" value="A/B=408-552"/>
</dbReference>
<dbReference type="PDB" id="7Z26">
    <property type="method" value="X-ray"/>
    <property type="resolution" value="1.90 A"/>
    <property type="chains" value="A/B=408-552"/>
</dbReference>
<dbReference type="PDB" id="7Z4U">
    <property type="method" value="X-ray"/>
    <property type="resolution" value="1.83 A"/>
    <property type="chains" value="A/B=408-552"/>
</dbReference>
<dbReference type="PDB" id="7Z54">
    <property type="method" value="X-ray"/>
    <property type="resolution" value="1.82 A"/>
    <property type="chains" value="A/B=408-552"/>
</dbReference>
<dbReference type="PDB" id="7Z5M">
    <property type="method" value="X-ray"/>
    <property type="resolution" value="1.70 A"/>
    <property type="chains" value="A/B=408-552"/>
</dbReference>
<dbReference type="PDB" id="7Z7B">
    <property type="method" value="X-ray"/>
    <property type="resolution" value="1.80 A"/>
    <property type="chains" value="A/B=408-552"/>
</dbReference>
<dbReference type="PDB" id="7Z7F">
    <property type="method" value="X-ray"/>
    <property type="resolution" value="1.95 A"/>
    <property type="chains" value="A/B=408-552"/>
</dbReference>
<dbReference type="PDB" id="7Z8P">
    <property type="method" value="X-ray"/>
    <property type="resolution" value="1.97 A"/>
    <property type="chains" value="A/B=408-552"/>
</dbReference>
<dbReference type="PDB" id="7Z8W">
    <property type="method" value="X-ray"/>
    <property type="resolution" value="1.90 A"/>
    <property type="chains" value="A/B=408-552"/>
</dbReference>
<dbReference type="PDB" id="7Z8X">
    <property type="method" value="X-ray"/>
    <property type="resolution" value="1.96 A"/>
    <property type="chains" value="A/B=408-552"/>
</dbReference>
<dbReference type="PDB" id="7Z92">
    <property type="method" value="X-ray"/>
    <property type="resolution" value="1.91 A"/>
    <property type="chains" value="A/B=408-552"/>
</dbReference>
<dbReference type="PDB" id="7Z93">
    <property type="method" value="X-ray"/>
    <property type="resolution" value="1.97 A"/>
    <property type="chains" value="A/B=408-552"/>
</dbReference>
<dbReference type="PDB" id="7ZG4">
    <property type="method" value="X-ray"/>
    <property type="resolution" value="2.01 A"/>
    <property type="chains" value="A/B=408-552"/>
</dbReference>
<dbReference type="PDBsum" id="4RDN"/>
<dbReference type="PDBsum" id="4RDO"/>
<dbReference type="PDBsum" id="4WQN"/>
<dbReference type="PDBsum" id="7A1V"/>
<dbReference type="PDBsum" id="7BIK"/>
<dbReference type="PDBsum" id="7R5F"/>
<dbReference type="PDBsum" id="7R5L"/>
<dbReference type="PDBsum" id="7R5W"/>
<dbReference type="PDBsum" id="7YWB"/>
<dbReference type="PDBsum" id="7YX6"/>
<dbReference type="PDBsum" id="7YXE"/>
<dbReference type="PDBsum" id="7Z26"/>
<dbReference type="PDBsum" id="7Z4U"/>
<dbReference type="PDBsum" id="7Z54"/>
<dbReference type="PDBsum" id="7Z5M"/>
<dbReference type="PDBsum" id="7Z7B"/>
<dbReference type="PDBsum" id="7Z7F"/>
<dbReference type="PDBsum" id="7Z8P"/>
<dbReference type="PDBsum" id="7Z8W"/>
<dbReference type="PDBsum" id="7Z8X"/>
<dbReference type="PDBsum" id="7Z92"/>
<dbReference type="PDBsum" id="7Z93"/>
<dbReference type="PDBsum" id="7ZG4"/>
<dbReference type="SMR" id="Q9Y5A9"/>
<dbReference type="BioGRID" id="119543">
    <property type="interactions" value="459"/>
</dbReference>
<dbReference type="FunCoup" id="Q9Y5A9">
    <property type="interactions" value="4347"/>
</dbReference>
<dbReference type="IntAct" id="Q9Y5A9">
    <property type="interactions" value="90"/>
</dbReference>
<dbReference type="MINT" id="Q9Y5A9"/>
<dbReference type="STRING" id="9606.ENSP00000444660"/>
<dbReference type="BindingDB" id="Q9Y5A9"/>
<dbReference type="ChEMBL" id="CHEMBL4295992"/>
<dbReference type="GlyCosmos" id="Q9Y5A9">
    <property type="glycosylation" value="1 site, 1 glycan"/>
</dbReference>
<dbReference type="GlyGen" id="Q9Y5A9">
    <property type="glycosylation" value="9 sites, 1 O-linked glycan (8 sites)"/>
</dbReference>
<dbReference type="iPTMnet" id="Q9Y5A9"/>
<dbReference type="MetOSite" id="Q9Y5A9"/>
<dbReference type="PhosphoSitePlus" id="Q9Y5A9"/>
<dbReference type="SwissPalm" id="Q9Y5A9"/>
<dbReference type="BioMuta" id="YTHDF2"/>
<dbReference type="DMDM" id="41019527"/>
<dbReference type="jPOST" id="Q9Y5A9"/>
<dbReference type="MassIVE" id="Q9Y5A9"/>
<dbReference type="PaxDb" id="9606-ENSP00000362918"/>
<dbReference type="PeptideAtlas" id="Q9Y5A9"/>
<dbReference type="ProteomicsDB" id="86326">
    <molecule id="Q9Y5A9-1"/>
</dbReference>
<dbReference type="ProteomicsDB" id="86327">
    <molecule id="Q9Y5A9-2"/>
</dbReference>
<dbReference type="Pumba" id="Q9Y5A9"/>
<dbReference type="Antibodypedia" id="30989">
    <property type="antibodies" value="147 antibodies from 28 providers"/>
</dbReference>
<dbReference type="DNASU" id="51441"/>
<dbReference type="Ensembl" id="ENST00000373812.8">
    <molecule id="Q9Y5A9-1"/>
    <property type="protein sequence ID" value="ENSP00000362918.3"/>
    <property type="gene ID" value="ENSG00000198492.16"/>
</dbReference>
<dbReference type="Ensembl" id="ENST00000541996.5">
    <molecule id="Q9Y5A9-2"/>
    <property type="protein sequence ID" value="ENSP00000439394.1"/>
    <property type="gene ID" value="ENSG00000198492.16"/>
</dbReference>
<dbReference type="Ensembl" id="ENST00000542507.5">
    <molecule id="Q9Y5A9-1"/>
    <property type="protein sequence ID" value="ENSP00000444660.1"/>
    <property type="gene ID" value="ENSG00000198492.16"/>
</dbReference>
<dbReference type="GeneID" id="51441"/>
<dbReference type="KEGG" id="hsa:51441"/>
<dbReference type="MANE-Select" id="ENST00000373812.8">
    <property type="protein sequence ID" value="ENSP00000362918.3"/>
    <property type="RefSeq nucleotide sequence ID" value="NM_016258.3"/>
    <property type="RefSeq protein sequence ID" value="NP_057342.2"/>
</dbReference>
<dbReference type="UCSC" id="uc001brc.4">
    <molecule id="Q9Y5A9-1"/>
    <property type="organism name" value="human"/>
</dbReference>
<dbReference type="AGR" id="HGNC:31675"/>
<dbReference type="CTD" id="51441"/>
<dbReference type="DisGeNET" id="51441"/>
<dbReference type="GeneCards" id="YTHDF2"/>
<dbReference type="HGNC" id="HGNC:31675">
    <property type="gene designation" value="YTHDF2"/>
</dbReference>
<dbReference type="HPA" id="ENSG00000198492">
    <property type="expression patterns" value="Low tissue specificity"/>
</dbReference>
<dbReference type="MIM" id="610640">
    <property type="type" value="gene"/>
</dbReference>
<dbReference type="neXtProt" id="NX_Q9Y5A9"/>
<dbReference type="PharmGKB" id="PA134964518"/>
<dbReference type="VEuPathDB" id="HostDB:ENSG00000198492"/>
<dbReference type="eggNOG" id="KOG1901">
    <property type="taxonomic scope" value="Eukaryota"/>
</dbReference>
<dbReference type="GeneTree" id="ENSGT00940000156761"/>
<dbReference type="HOGENOM" id="CLU_022715_0_0_1"/>
<dbReference type="InParanoid" id="Q9Y5A9"/>
<dbReference type="OMA" id="SPQARPX"/>
<dbReference type="OrthoDB" id="306690at2759"/>
<dbReference type="PAN-GO" id="Q9Y5A9">
    <property type="GO annotations" value="4 GO annotations based on evolutionary models"/>
</dbReference>
<dbReference type="PhylomeDB" id="Q9Y5A9"/>
<dbReference type="TreeFam" id="TF323736"/>
<dbReference type="PathwayCommons" id="Q9Y5A9"/>
<dbReference type="SignaLink" id="Q9Y5A9"/>
<dbReference type="BioGRID-ORCS" id="51441">
    <property type="hits" value="189 hits in 1165 CRISPR screens"/>
</dbReference>
<dbReference type="CD-CODE" id="232F8A39">
    <property type="entry name" value="P-body"/>
</dbReference>
<dbReference type="CD-CODE" id="D8E9712B">
    <property type="entry name" value="Neuronal RNP granule"/>
</dbReference>
<dbReference type="CD-CODE" id="DEE660B4">
    <property type="entry name" value="Stress granule"/>
</dbReference>
<dbReference type="ChiTaRS" id="YTHDF2">
    <property type="organism name" value="human"/>
</dbReference>
<dbReference type="EvolutionaryTrace" id="Q9Y5A9"/>
<dbReference type="GenomeRNAi" id="51441"/>
<dbReference type="Pharos" id="Q9Y5A9">
    <property type="development level" value="Tbio"/>
</dbReference>
<dbReference type="PRO" id="PR:Q9Y5A9"/>
<dbReference type="Proteomes" id="UP000005640">
    <property type="component" value="Chromosome 1"/>
</dbReference>
<dbReference type="RNAct" id="Q9Y5A9">
    <property type="molecule type" value="protein"/>
</dbReference>
<dbReference type="Bgee" id="ENSG00000198492">
    <property type="expression patterns" value="Expressed in primordial germ cell in gonad and 104 other cell types or tissues"/>
</dbReference>
<dbReference type="ExpressionAtlas" id="Q9Y5A9">
    <property type="expression patterns" value="baseline and differential"/>
</dbReference>
<dbReference type="GO" id="GO:0034451">
    <property type="term" value="C:centriolar satellite"/>
    <property type="evidence" value="ECO:0000314"/>
    <property type="project" value="HPA"/>
</dbReference>
<dbReference type="GO" id="GO:0005737">
    <property type="term" value="C:cytoplasm"/>
    <property type="evidence" value="ECO:0000314"/>
    <property type="project" value="UniProtKB"/>
</dbReference>
<dbReference type="GO" id="GO:0036464">
    <property type="term" value="C:cytoplasmic ribonucleoprotein granule"/>
    <property type="evidence" value="ECO:0000314"/>
    <property type="project" value="HPA"/>
</dbReference>
<dbReference type="GO" id="GO:0010494">
    <property type="term" value="C:cytoplasmic stress granule"/>
    <property type="evidence" value="ECO:0000314"/>
    <property type="project" value="UniProtKB"/>
</dbReference>
<dbReference type="GO" id="GO:0005829">
    <property type="term" value="C:cytosol"/>
    <property type="evidence" value="ECO:0000314"/>
    <property type="project" value="HPA"/>
</dbReference>
<dbReference type="GO" id="GO:0005634">
    <property type="term" value="C:nucleus"/>
    <property type="evidence" value="ECO:0000314"/>
    <property type="project" value="UniProtKB"/>
</dbReference>
<dbReference type="GO" id="GO:0000932">
    <property type="term" value="C:P-body"/>
    <property type="evidence" value="ECO:0000314"/>
    <property type="project" value="UniProtKB"/>
</dbReference>
<dbReference type="GO" id="GO:0062153">
    <property type="term" value="F:C5-methylcytidine-containing RNA reader activity"/>
    <property type="evidence" value="ECO:0000314"/>
    <property type="project" value="UniProtKB"/>
</dbReference>
<dbReference type="GO" id="GO:0003729">
    <property type="term" value="F:mRNA binding"/>
    <property type="evidence" value="ECO:0000318"/>
    <property type="project" value="GO_Central"/>
</dbReference>
<dbReference type="GO" id="GO:1990247">
    <property type="term" value="F:N6-methyladenosine-containing RNA reader activity"/>
    <property type="evidence" value="ECO:0000314"/>
    <property type="project" value="UniProtKB"/>
</dbReference>
<dbReference type="GO" id="GO:0003723">
    <property type="term" value="F:RNA binding"/>
    <property type="evidence" value="ECO:0007005"/>
    <property type="project" value="UniProtKB"/>
</dbReference>
<dbReference type="GO" id="GO:0048598">
    <property type="term" value="P:embryonic morphogenesis"/>
    <property type="evidence" value="ECO:0000250"/>
    <property type="project" value="UniProtKB"/>
</dbReference>
<dbReference type="GO" id="GO:0098508">
    <property type="term" value="P:endothelial to hematopoietic transition"/>
    <property type="evidence" value="ECO:0000250"/>
    <property type="project" value="UniProtKB"/>
</dbReference>
<dbReference type="GO" id="GO:0007276">
    <property type="term" value="P:gamete generation"/>
    <property type="evidence" value="ECO:0000250"/>
    <property type="project" value="UniProtKB"/>
</dbReference>
<dbReference type="GO" id="GO:0071425">
    <property type="term" value="P:hematopoietic stem cell proliferation"/>
    <property type="evidence" value="ECO:0000250"/>
    <property type="project" value="UniProtKB"/>
</dbReference>
<dbReference type="GO" id="GO:0006959">
    <property type="term" value="P:humoral immune response"/>
    <property type="evidence" value="ECO:0000304"/>
    <property type="project" value="ProtInc"/>
</dbReference>
<dbReference type="GO" id="GO:0045087">
    <property type="term" value="P:innate immune response"/>
    <property type="evidence" value="ECO:0007669"/>
    <property type="project" value="UniProtKB-KW"/>
</dbReference>
<dbReference type="GO" id="GO:0006402">
    <property type="term" value="P:mRNA catabolic process"/>
    <property type="evidence" value="ECO:0000314"/>
    <property type="project" value="UniProtKB"/>
</dbReference>
<dbReference type="GO" id="GO:0061157">
    <property type="term" value="P:mRNA destabilization"/>
    <property type="evidence" value="ECO:0000314"/>
    <property type="project" value="UniProtKB"/>
</dbReference>
<dbReference type="GO" id="GO:0045746">
    <property type="term" value="P:negative regulation of Notch signaling pathway"/>
    <property type="evidence" value="ECO:0000250"/>
    <property type="project" value="UniProtKB"/>
</dbReference>
<dbReference type="GO" id="GO:2000737">
    <property type="term" value="P:negative regulation of stem cell differentiation"/>
    <property type="evidence" value="ECO:0000315"/>
    <property type="project" value="UniProtKB"/>
</dbReference>
<dbReference type="GO" id="GO:0060339">
    <property type="term" value="P:negative regulation of type I interferon-mediated signaling pathway"/>
    <property type="evidence" value="ECO:0000315"/>
    <property type="project" value="UniProtKB"/>
</dbReference>
<dbReference type="GO" id="GO:0001556">
    <property type="term" value="P:oocyte maturation"/>
    <property type="evidence" value="ECO:0000250"/>
    <property type="project" value="UniProtKB"/>
</dbReference>
<dbReference type="GO" id="GO:0070925">
    <property type="term" value="P:organelle assembly"/>
    <property type="evidence" value="ECO:0000314"/>
    <property type="project" value="UniProtKB"/>
</dbReference>
<dbReference type="GO" id="GO:1903679">
    <property type="term" value="P:positive regulation of cap-independent translational initiation"/>
    <property type="evidence" value="ECO:0000314"/>
    <property type="project" value="UniProtKB"/>
</dbReference>
<dbReference type="GO" id="GO:0030155">
    <property type="term" value="P:regulation of cell adhesion"/>
    <property type="evidence" value="ECO:0000250"/>
    <property type="project" value="UniProtKB"/>
</dbReference>
<dbReference type="GO" id="GO:1902036">
    <property type="term" value="P:regulation of hematopoietic stem cell differentiation"/>
    <property type="evidence" value="ECO:0000250"/>
    <property type="project" value="UniProtKB"/>
</dbReference>
<dbReference type="GO" id="GO:1903538">
    <property type="term" value="P:regulation of meiotic cell cycle process involved in oocyte maturation"/>
    <property type="evidence" value="ECO:0000250"/>
    <property type="project" value="UniProtKB"/>
</dbReference>
<dbReference type="GO" id="GO:0043488">
    <property type="term" value="P:regulation of mRNA stability"/>
    <property type="evidence" value="ECO:0000314"/>
    <property type="project" value="UniProtKB"/>
</dbReference>
<dbReference type="GO" id="GO:0050767">
    <property type="term" value="P:regulation of neurogenesis"/>
    <property type="evidence" value="ECO:0000315"/>
    <property type="project" value="UniProtKB"/>
</dbReference>
<dbReference type="GO" id="GO:2000232">
    <property type="term" value="P:regulation of rRNA processing"/>
    <property type="evidence" value="ECO:0000315"/>
    <property type="project" value="UniProtKB"/>
</dbReference>
<dbReference type="GO" id="GO:0007284">
    <property type="term" value="P:spermatogonial cell division"/>
    <property type="evidence" value="ECO:0000250"/>
    <property type="project" value="UniProtKB"/>
</dbReference>
<dbReference type="GO" id="GO:0034063">
    <property type="term" value="P:stress granule assembly"/>
    <property type="evidence" value="ECO:0000314"/>
    <property type="project" value="UniProtKB"/>
</dbReference>
<dbReference type="CDD" id="cd21134">
    <property type="entry name" value="YTH"/>
    <property type="match status" value="1"/>
</dbReference>
<dbReference type="FunFam" id="3.10.590.10:FF:000001">
    <property type="entry name" value="YTH domain family 1, isoform CRA_a"/>
    <property type="match status" value="1"/>
</dbReference>
<dbReference type="Gene3D" id="3.10.590.10">
    <property type="entry name" value="ph1033 like domains"/>
    <property type="match status" value="1"/>
</dbReference>
<dbReference type="InterPro" id="IPR007275">
    <property type="entry name" value="YTH_domain"/>
</dbReference>
<dbReference type="InterPro" id="IPR045168">
    <property type="entry name" value="YTH_prot"/>
</dbReference>
<dbReference type="PANTHER" id="PTHR12357:SF8">
    <property type="entry name" value="YTH DOMAIN-CONTAINING FAMILY PROTEIN 2"/>
    <property type="match status" value="1"/>
</dbReference>
<dbReference type="PANTHER" id="PTHR12357">
    <property type="entry name" value="YTH YT521-B HOMOLOGY DOMAIN-CONTAINING"/>
    <property type="match status" value="1"/>
</dbReference>
<dbReference type="Pfam" id="PF04146">
    <property type="entry name" value="YTH"/>
    <property type="match status" value="1"/>
</dbReference>
<dbReference type="PROSITE" id="PS50882">
    <property type="entry name" value="YTH"/>
    <property type="match status" value="1"/>
</dbReference>
<feature type="initiator methionine" description="Removed" evidence="29 41 44">
    <location>
        <position position="1"/>
    </location>
</feature>
<feature type="chain" id="PRO_0000223075" description="YTH domain-containing family protein 2">
    <location>
        <begin position="2"/>
        <end position="579"/>
    </location>
</feature>
<feature type="domain" description="YTH" evidence="3">
    <location>
        <begin position="410"/>
        <end position="544"/>
    </location>
</feature>
<feature type="region of interest" description="Disordered" evidence="4">
    <location>
        <begin position="1"/>
        <end position="45"/>
    </location>
</feature>
<feature type="region of interest" description="Localization to mRNA processing bodies (P-bodies)" evidence="6">
    <location>
        <begin position="2"/>
        <end position="384"/>
    </location>
</feature>
<feature type="region of interest" description="Disordered" evidence="4">
    <location>
        <begin position="247"/>
        <end position="387"/>
    </location>
</feature>
<feature type="region of interest" description="Interaction with m6A-containing mRNAs" evidence="6">
    <location>
        <begin position="385"/>
        <end position="579"/>
    </location>
</feature>
<feature type="compositionally biased region" description="Polar residues" evidence="4">
    <location>
        <begin position="291"/>
        <end position="316"/>
    </location>
</feature>
<feature type="compositionally biased region" description="Low complexity" evidence="4">
    <location>
        <begin position="337"/>
        <end position="349"/>
    </location>
</feature>
<feature type="compositionally biased region" description="Gly residues" evidence="4">
    <location>
        <begin position="359"/>
        <end position="371"/>
    </location>
</feature>
<feature type="compositionally biased region" description="Polar residues" evidence="4">
    <location>
        <begin position="372"/>
        <end position="383"/>
    </location>
</feature>
<feature type="binding site" evidence="7 39">
    <location>
        <begin position="416"/>
        <end position="418"/>
    </location>
    <ligand>
        <name>RNA</name>
        <dbReference type="ChEBI" id="CHEBI:33697"/>
    </ligand>
    <ligandPart>
        <name>N(6)-methyladenosine 5'-phosphate residue</name>
        <dbReference type="ChEBI" id="CHEBI:74449"/>
    </ligandPart>
</feature>
<feature type="binding site" evidence="7 39">
    <location>
        <position position="422"/>
    </location>
    <ligand>
        <name>RNA</name>
        <dbReference type="ChEBI" id="CHEBI:33697"/>
    </ligand>
    <ligandPart>
        <name>N(6)-methyladenosine 5'-phosphate residue</name>
        <dbReference type="ChEBI" id="CHEBI:74449"/>
    </ligandPart>
</feature>
<feature type="binding site" evidence="7 39">
    <location>
        <begin position="432"/>
        <end position="433"/>
    </location>
    <ligand>
        <name>RNA</name>
        <dbReference type="ChEBI" id="CHEBI:33697"/>
    </ligand>
    <ligandPart>
        <name>N(6)-methyladenosine 5'-phosphate residue</name>
        <dbReference type="ChEBI" id="CHEBI:74449"/>
    </ligandPart>
</feature>
<feature type="binding site" evidence="7 39">
    <location>
        <position position="462"/>
    </location>
    <ligand>
        <name>RNA</name>
        <dbReference type="ChEBI" id="CHEBI:33697"/>
    </ligand>
    <ligandPart>
        <name>N(6)-methyladenosine 5'-phosphate residue</name>
        <dbReference type="ChEBI" id="CHEBI:74449"/>
    </ligandPart>
</feature>
<feature type="binding site" evidence="7 39">
    <location>
        <position position="486"/>
    </location>
    <ligand>
        <name>RNA</name>
        <dbReference type="ChEBI" id="CHEBI:33697"/>
    </ligand>
    <ligandPart>
        <name>N(6)-methyladenosine 5'-phosphate residue</name>
        <dbReference type="ChEBI" id="CHEBI:74449"/>
    </ligandPart>
</feature>
<feature type="binding site" evidence="7 39">
    <location>
        <position position="491"/>
    </location>
    <ligand>
        <name>RNA</name>
        <dbReference type="ChEBI" id="CHEBI:33697"/>
    </ligand>
    <ligandPart>
        <name>N(6)-methyladenosine 5'-phosphate residue</name>
        <dbReference type="ChEBI" id="CHEBI:74449"/>
    </ligandPart>
</feature>
<feature type="modified residue" description="N-acetylserine" evidence="29 41 44">
    <location>
        <position position="2"/>
    </location>
</feature>
<feature type="modified residue" description="Phosphoserine" evidence="45">
    <location>
        <position position="2"/>
    </location>
</feature>
<feature type="modified residue" description="Phosphoserine" evidence="45">
    <location>
        <position position="4"/>
    </location>
</feature>
<feature type="modified residue" description="Phosphoserine" evidence="45">
    <location>
        <position position="5"/>
    </location>
</feature>
<feature type="modified residue" description="Phosphoserine" evidence="1">
    <location>
        <position position="22"/>
    </location>
</feature>
<feature type="modified residue" description="Phosphoserine" evidence="40 42">
    <location>
        <position position="39"/>
    </location>
</feature>
<feature type="modified residue" description="Phosphoserine" evidence="45">
    <location>
        <position position="196"/>
    </location>
</feature>
<feature type="modified residue" description="Phosphoserine" evidence="42">
    <location>
        <position position="359"/>
    </location>
</feature>
<feature type="modified residue" description="Phosphoserine" evidence="43">
    <location>
        <position position="394"/>
    </location>
</feature>
<feature type="splice variant" id="VSP_009297" description="In isoform 2." evidence="31 36">
    <location>
        <begin position="1"/>
        <end position="50"/>
    </location>
</feature>
<feature type="sequence variant" id="VAR_053744" description="In dbSNP:rs16838382.">
    <original>T</original>
    <variation>S</variation>
    <location>
        <position position="217"/>
    </location>
</feature>
<feature type="sequence variant" id="VAR_053745" description="In dbSNP:rs35288745.">
    <original>P</original>
    <variation>S</variation>
    <location>
        <position position="454"/>
    </location>
</feature>
<feature type="mutagenesis site" description="Slightly decreased binding to RNAs." evidence="8">
    <original>R</original>
    <variation>A</variation>
    <location>
        <position position="411"/>
    </location>
</feature>
<feature type="mutagenesis site" description="Decreased binding to RNAs." evidence="8">
    <original>K</original>
    <variation>A</variation>
    <location>
        <position position="416"/>
    </location>
</feature>
<feature type="mutagenesis site" description="Reduced binding to N6-methyladenosine (m6A)-containing RNAs. Reduced ability to undergo liquid-liquid phase separation. Reduced binding to C5-methylcytosine (m5C)-containing RNAs." evidence="7 8 21 22 24">
    <original>W</original>
    <variation>A</variation>
    <location>
        <position position="432"/>
    </location>
</feature>
<feature type="mutagenesis site" description="Slightly decreased binding to RNAs." evidence="8">
    <original>R</original>
    <variation>A</variation>
    <location>
        <position position="441"/>
    </location>
</feature>
<feature type="mutagenesis site" description="Reduced binding to N6-methyladenosine (m6A)-containing RNAs. Reduced ability to undergo liquid-liquid phase separation; when associated with A-432." evidence="7 8 22">
    <original>W</original>
    <variation>A</variation>
    <location>
        <position position="486"/>
    </location>
</feature>
<feature type="mutagenesis site" description="Reduced binding to N6-methyladenosine (m6A)-containing RNAs." evidence="7">
    <original>W</original>
    <variation>A</variation>
    <location>
        <position position="491"/>
    </location>
</feature>
<feature type="mutagenesis site" description="Decreased binding to RNAs." evidence="8">
    <original>R</original>
    <variation>A</variation>
    <location>
        <position position="527"/>
    </location>
</feature>
<feature type="strand" evidence="46">
    <location>
        <begin position="411"/>
        <end position="418"/>
    </location>
</feature>
<feature type="helix" evidence="46">
    <location>
        <begin position="420"/>
        <end position="429"/>
    </location>
</feature>
<feature type="strand" evidence="48">
    <location>
        <begin position="430"/>
        <end position="432"/>
    </location>
</feature>
<feature type="helix" evidence="46">
    <location>
        <begin position="436"/>
        <end position="449"/>
    </location>
</feature>
<feature type="strand" evidence="46">
    <location>
        <begin position="455"/>
        <end position="461"/>
    </location>
</feature>
<feature type="strand" evidence="46">
    <location>
        <begin position="464"/>
        <end position="473"/>
    </location>
</feature>
<feature type="strand" evidence="47">
    <location>
        <begin position="478"/>
        <end position="480"/>
    </location>
</feature>
<feature type="strand" evidence="46">
    <location>
        <begin position="485"/>
        <end position="488"/>
    </location>
</feature>
<feature type="strand" evidence="46">
    <location>
        <begin position="494"/>
        <end position="506"/>
    </location>
</feature>
<feature type="helix" evidence="46">
    <location>
        <begin position="507"/>
        <end position="509"/>
    </location>
</feature>
<feature type="turn" evidence="46">
    <location>
        <begin position="510"/>
        <end position="512"/>
    </location>
</feature>
<feature type="turn" evidence="46">
    <location>
        <begin position="516"/>
        <end position="520"/>
    </location>
</feature>
<feature type="helix" evidence="46">
    <location>
        <begin position="523"/>
        <end position="525"/>
    </location>
</feature>
<feature type="helix" evidence="46">
    <location>
        <begin position="534"/>
        <end position="546"/>
    </location>
</feature>
<reference key="1">
    <citation type="journal article" date="1999" name="Int. J. Cancer">
        <title>Antigens recognized by autologous antibody in patients with renal-cell carcinoma.</title>
        <authorList>
            <person name="Scanlan M.J."/>
            <person name="Gordan J.D."/>
            <person name="Williamson B."/>
            <person name="Stockert E."/>
            <person name="Bander N.H."/>
            <person name="Jongeneel C.V."/>
            <person name="Gure A.O."/>
            <person name="Jaeger D."/>
            <person name="Jaeger E."/>
            <person name="Knuth A."/>
            <person name="Chen Y.-T."/>
            <person name="Old L.J."/>
        </authorList>
    </citation>
    <scope>NUCLEOTIDE SEQUENCE [MRNA] (ISOFORM 1)</scope>
    <scope>IDENTIFICATION AS A RENAL CANCER ANTIGEN</scope>
    <source>
        <tissue>Renal cell carcinoma</tissue>
    </source>
</reference>
<reference key="2">
    <citation type="submission" date="1999-10" db="EMBL/GenBank/DDBJ databases">
        <title>Gene which is selectively expressed in hyperglycaemia.</title>
        <authorList>
            <person name="Roberts T.P."/>
            <person name="Wright A."/>
            <person name="Wahab N.A."/>
            <person name="Weston B.S."/>
            <person name="Mason R.M."/>
        </authorList>
    </citation>
    <scope>NUCLEOTIDE SEQUENCE [MRNA] (ISOFORM 1)</scope>
</reference>
<reference key="3">
    <citation type="submission" date="2001-10" db="EMBL/GenBank/DDBJ databases">
        <title>Identification of novel tumor antigens in CLL by SEREX: assessment of their potential as targets for immunotherapeutic approaches.</title>
        <authorList>
            <person name="Krackhardt A.M."/>
            <person name="Witzens M."/>
            <person name="Harig S."/>
            <person name="Hodi F.S."/>
            <person name="Zauls A.J."/>
            <person name="Chessia M."/>
            <person name="Barrett P."/>
            <person name="Gribben J.G."/>
        </authorList>
    </citation>
    <scope>NUCLEOTIDE SEQUENCE [MRNA] (ISOFORM 2)</scope>
</reference>
<reference key="4">
    <citation type="journal article" date="2004" name="Nat. Genet.">
        <title>Complete sequencing and characterization of 21,243 full-length human cDNAs.</title>
        <authorList>
            <person name="Ota T."/>
            <person name="Suzuki Y."/>
            <person name="Nishikawa T."/>
            <person name="Otsuki T."/>
            <person name="Sugiyama T."/>
            <person name="Irie R."/>
            <person name="Wakamatsu A."/>
            <person name="Hayashi K."/>
            <person name="Sato H."/>
            <person name="Nagai K."/>
            <person name="Kimura K."/>
            <person name="Makita H."/>
            <person name="Sekine M."/>
            <person name="Obayashi M."/>
            <person name="Nishi T."/>
            <person name="Shibahara T."/>
            <person name="Tanaka T."/>
            <person name="Ishii S."/>
            <person name="Yamamoto J."/>
            <person name="Saito K."/>
            <person name="Kawai Y."/>
            <person name="Isono Y."/>
            <person name="Nakamura Y."/>
            <person name="Nagahari K."/>
            <person name="Murakami K."/>
            <person name="Yasuda T."/>
            <person name="Iwayanagi T."/>
            <person name="Wagatsuma M."/>
            <person name="Shiratori A."/>
            <person name="Sudo H."/>
            <person name="Hosoiri T."/>
            <person name="Kaku Y."/>
            <person name="Kodaira H."/>
            <person name="Kondo H."/>
            <person name="Sugawara M."/>
            <person name="Takahashi M."/>
            <person name="Kanda K."/>
            <person name="Yokoi T."/>
            <person name="Furuya T."/>
            <person name="Kikkawa E."/>
            <person name="Omura Y."/>
            <person name="Abe K."/>
            <person name="Kamihara K."/>
            <person name="Katsuta N."/>
            <person name="Sato K."/>
            <person name="Tanikawa M."/>
            <person name="Yamazaki M."/>
            <person name="Ninomiya K."/>
            <person name="Ishibashi T."/>
            <person name="Yamashita H."/>
            <person name="Murakawa K."/>
            <person name="Fujimori K."/>
            <person name="Tanai H."/>
            <person name="Kimata M."/>
            <person name="Watanabe M."/>
            <person name="Hiraoka S."/>
            <person name="Chiba Y."/>
            <person name="Ishida S."/>
            <person name="Ono Y."/>
            <person name="Takiguchi S."/>
            <person name="Watanabe S."/>
            <person name="Yosida M."/>
            <person name="Hotuta T."/>
            <person name="Kusano J."/>
            <person name="Kanehori K."/>
            <person name="Takahashi-Fujii A."/>
            <person name="Hara H."/>
            <person name="Tanase T.-O."/>
            <person name="Nomura Y."/>
            <person name="Togiya S."/>
            <person name="Komai F."/>
            <person name="Hara R."/>
            <person name="Takeuchi K."/>
            <person name="Arita M."/>
            <person name="Imose N."/>
            <person name="Musashino K."/>
            <person name="Yuuki H."/>
            <person name="Oshima A."/>
            <person name="Sasaki N."/>
            <person name="Aotsuka S."/>
            <person name="Yoshikawa Y."/>
            <person name="Matsunawa H."/>
            <person name="Ichihara T."/>
            <person name="Shiohata N."/>
            <person name="Sano S."/>
            <person name="Moriya S."/>
            <person name="Momiyama H."/>
            <person name="Satoh N."/>
            <person name="Takami S."/>
            <person name="Terashima Y."/>
            <person name="Suzuki O."/>
            <person name="Nakagawa S."/>
            <person name="Senoh A."/>
            <person name="Mizoguchi H."/>
            <person name="Goto Y."/>
            <person name="Shimizu F."/>
            <person name="Wakebe H."/>
            <person name="Hishigaki H."/>
            <person name="Watanabe T."/>
            <person name="Sugiyama A."/>
            <person name="Takemoto M."/>
            <person name="Kawakami B."/>
            <person name="Yamazaki M."/>
            <person name="Watanabe K."/>
            <person name="Kumagai A."/>
            <person name="Itakura S."/>
            <person name="Fukuzumi Y."/>
            <person name="Fujimori Y."/>
            <person name="Komiyama M."/>
            <person name="Tashiro H."/>
            <person name="Tanigami A."/>
            <person name="Fujiwara T."/>
            <person name="Ono T."/>
            <person name="Yamada K."/>
            <person name="Fujii Y."/>
            <person name="Ozaki K."/>
            <person name="Hirao M."/>
            <person name="Ohmori Y."/>
            <person name="Kawabata A."/>
            <person name="Hikiji T."/>
            <person name="Kobatake N."/>
            <person name="Inagaki H."/>
            <person name="Ikema Y."/>
            <person name="Okamoto S."/>
            <person name="Okitani R."/>
            <person name="Kawakami T."/>
            <person name="Noguchi S."/>
            <person name="Itoh T."/>
            <person name="Shigeta K."/>
            <person name="Senba T."/>
            <person name="Matsumura K."/>
            <person name="Nakajima Y."/>
            <person name="Mizuno T."/>
            <person name="Morinaga M."/>
            <person name="Sasaki M."/>
            <person name="Togashi T."/>
            <person name="Oyama M."/>
            <person name="Hata H."/>
            <person name="Watanabe M."/>
            <person name="Komatsu T."/>
            <person name="Mizushima-Sugano J."/>
            <person name="Satoh T."/>
            <person name="Shirai Y."/>
            <person name="Takahashi Y."/>
            <person name="Nakagawa K."/>
            <person name="Okumura K."/>
            <person name="Nagase T."/>
            <person name="Nomura N."/>
            <person name="Kikuchi H."/>
            <person name="Masuho Y."/>
            <person name="Yamashita R."/>
            <person name="Nakai K."/>
            <person name="Yada T."/>
            <person name="Nakamura Y."/>
            <person name="Ohara O."/>
            <person name="Isogai T."/>
            <person name="Sugano S."/>
        </authorList>
    </citation>
    <scope>NUCLEOTIDE SEQUENCE [LARGE SCALE MRNA] (ISOFORMS 1 AND 2)</scope>
    <source>
        <tissue>Ovary</tissue>
        <tissue>Testis</tissue>
    </source>
</reference>
<reference key="5">
    <citation type="journal article" date="2006" name="Nature">
        <title>The DNA sequence and biological annotation of human chromosome 1.</title>
        <authorList>
            <person name="Gregory S.G."/>
            <person name="Barlow K.F."/>
            <person name="McLay K.E."/>
            <person name="Kaul R."/>
            <person name="Swarbreck D."/>
            <person name="Dunham A."/>
            <person name="Scott C.E."/>
            <person name="Howe K.L."/>
            <person name="Woodfine K."/>
            <person name="Spencer C.C.A."/>
            <person name="Jones M.C."/>
            <person name="Gillson C."/>
            <person name="Searle S."/>
            <person name="Zhou Y."/>
            <person name="Kokocinski F."/>
            <person name="McDonald L."/>
            <person name="Evans R."/>
            <person name="Phillips K."/>
            <person name="Atkinson A."/>
            <person name="Cooper R."/>
            <person name="Jones C."/>
            <person name="Hall R.E."/>
            <person name="Andrews T.D."/>
            <person name="Lloyd C."/>
            <person name="Ainscough R."/>
            <person name="Almeida J.P."/>
            <person name="Ambrose K.D."/>
            <person name="Anderson F."/>
            <person name="Andrew R.W."/>
            <person name="Ashwell R.I.S."/>
            <person name="Aubin K."/>
            <person name="Babbage A.K."/>
            <person name="Bagguley C.L."/>
            <person name="Bailey J."/>
            <person name="Beasley H."/>
            <person name="Bethel G."/>
            <person name="Bird C.P."/>
            <person name="Bray-Allen S."/>
            <person name="Brown J.Y."/>
            <person name="Brown A.J."/>
            <person name="Buckley D."/>
            <person name="Burton J."/>
            <person name="Bye J."/>
            <person name="Carder C."/>
            <person name="Chapman J.C."/>
            <person name="Clark S.Y."/>
            <person name="Clarke G."/>
            <person name="Clee C."/>
            <person name="Cobley V."/>
            <person name="Collier R.E."/>
            <person name="Corby N."/>
            <person name="Coville G.J."/>
            <person name="Davies J."/>
            <person name="Deadman R."/>
            <person name="Dunn M."/>
            <person name="Earthrowl M."/>
            <person name="Ellington A.G."/>
            <person name="Errington H."/>
            <person name="Frankish A."/>
            <person name="Frankland J."/>
            <person name="French L."/>
            <person name="Garner P."/>
            <person name="Garnett J."/>
            <person name="Gay L."/>
            <person name="Ghori M.R.J."/>
            <person name="Gibson R."/>
            <person name="Gilby L.M."/>
            <person name="Gillett W."/>
            <person name="Glithero R.J."/>
            <person name="Grafham D.V."/>
            <person name="Griffiths C."/>
            <person name="Griffiths-Jones S."/>
            <person name="Grocock R."/>
            <person name="Hammond S."/>
            <person name="Harrison E.S.I."/>
            <person name="Hart E."/>
            <person name="Haugen E."/>
            <person name="Heath P.D."/>
            <person name="Holmes S."/>
            <person name="Holt K."/>
            <person name="Howden P.J."/>
            <person name="Hunt A.R."/>
            <person name="Hunt S.E."/>
            <person name="Hunter G."/>
            <person name="Isherwood J."/>
            <person name="James R."/>
            <person name="Johnson C."/>
            <person name="Johnson D."/>
            <person name="Joy A."/>
            <person name="Kay M."/>
            <person name="Kershaw J.K."/>
            <person name="Kibukawa M."/>
            <person name="Kimberley A.M."/>
            <person name="King A."/>
            <person name="Knights A.J."/>
            <person name="Lad H."/>
            <person name="Laird G."/>
            <person name="Lawlor S."/>
            <person name="Leongamornlert D.A."/>
            <person name="Lloyd D.M."/>
            <person name="Loveland J."/>
            <person name="Lovell J."/>
            <person name="Lush M.J."/>
            <person name="Lyne R."/>
            <person name="Martin S."/>
            <person name="Mashreghi-Mohammadi M."/>
            <person name="Matthews L."/>
            <person name="Matthews N.S.W."/>
            <person name="McLaren S."/>
            <person name="Milne S."/>
            <person name="Mistry S."/>
            <person name="Moore M.J.F."/>
            <person name="Nickerson T."/>
            <person name="O'Dell C.N."/>
            <person name="Oliver K."/>
            <person name="Palmeiri A."/>
            <person name="Palmer S.A."/>
            <person name="Parker A."/>
            <person name="Patel D."/>
            <person name="Pearce A.V."/>
            <person name="Peck A.I."/>
            <person name="Pelan S."/>
            <person name="Phelps K."/>
            <person name="Phillimore B.J."/>
            <person name="Plumb R."/>
            <person name="Rajan J."/>
            <person name="Raymond C."/>
            <person name="Rouse G."/>
            <person name="Saenphimmachak C."/>
            <person name="Sehra H.K."/>
            <person name="Sheridan E."/>
            <person name="Shownkeen R."/>
            <person name="Sims S."/>
            <person name="Skuce C.D."/>
            <person name="Smith M."/>
            <person name="Steward C."/>
            <person name="Subramanian S."/>
            <person name="Sycamore N."/>
            <person name="Tracey A."/>
            <person name="Tromans A."/>
            <person name="Van Helmond Z."/>
            <person name="Wall M."/>
            <person name="Wallis J.M."/>
            <person name="White S."/>
            <person name="Whitehead S.L."/>
            <person name="Wilkinson J.E."/>
            <person name="Willey D.L."/>
            <person name="Williams H."/>
            <person name="Wilming L."/>
            <person name="Wray P.W."/>
            <person name="Wu Z."/>
            <person name="Coulson A."/>
            <person name="Vaudin M."/>
            <person name="Sulston J.E."/>
            <person name="Durbin R.M."/>
            <person name="Hubbard T."/>
            <person name="Wooster R."/>
            <person name="Dunham I."/>
            <person name="Carter N.P."/>
            <person name="McVean G."/>
            <person name="Ross M.T."/>
            <person name="Harrow J."/>
            <person name="Olson M.V."/>
            <person name="Beck S."/>
            <person name="Rogers J."/>
            <person name="Bentley D.R."/>
        </authorList>
    </citation>
    <scope>NUCLEOTIDE SEQUENCE [LARGE SCALE GENOMIC DNA]</scope>
</reference>
<reference key="6">
    <citation type="submission" date="2005-09" db="EMBL/GenBank/DDBJ databases">
        <authorList>
            <person name="Mural R.J."/>
            <person name="Istrail S."/>
            <person name="Sutton G.G."/>
            <person name="Florea L."/>
            <person name="Halpern A.L."/>
            <person name="Mobarry C.M."/>
            <person name="Lippert R."/>
            <person name="Walenz B."/>
            <person name="Shatkay H."/>
            <person name="Dew I."/>
            <person name="Miller J.R."/>
            <person name="Flanigan M.J."/>
            <person name="Edwards N.J."/>
            <person name="Bolanos R."/>
            <person name="Fasulo D."/>
            <person name="Halldorsson B.V."/>
            <person name="Hannenhalli S."/>
            <person name="Turner R."/>
            <person name="Yooseph S."/>
            <person name="Lu F."/>
            <person name="Nusskern D.R."/>
            <person name="Shue B.C."/>
            <person name="Zheng X.H."/>
            <person name="Zhong F."/>
            <person name="Delcher A.L."/>
            <person name="Huson D.H."/>
            <person name="Kravitz S.A."/>
            <person name="Mouchard L."/>
            <person name="Reinert K."/>
            <person name="Remington K.A."/>
            <person name="Clark A.G."/>
            <person name="Waterman M.S."/>
            <person name="Eichler E.E."/>
            <person name="Adams M.D."/>
            <person name="Hunkapiller M.W."/>
            <person name="Myers E.W."/>
            <person name="Venter J.C."/>
        </authorList>
    </citation>
    <scope>NUCLEOTIDE SEQUENCE [LARGE SCALE GENOMIC DNA]</scope>
</reference>
<reference key="7">
    <citation type="journal article" date="2004" name="Genome Res.">
        <title>The status, quality, and expansion of the NIH full-length cDNA project: the Mammalian Gene Collection (MGC).</title>
        <authorList>
            <consortium name="The MGC Project Team"/>
        </authorList>
    </citation>
    <scope>NUCLEOTIDE SEQUENCE [LARGE SCALE MRNA] (ISOFORM 1)</scope>
    <source>
        <tissue>Placenta</tissue>
    </source>
</reference>
<reference key="8">
    <citation type="submission" date="2008-12" db="UniProtKB">
        <authorList>
            <person name="Bienvenut W.V."/>
            <person name="Vousden K.H."/>
            <person name="Lukashchuk N."/>
            <person name="Lilla S."/>
            <person name="von Kriegsheim A."/>
            <person name="Lempens A."/>
            <person name="Kolch W."/>
        </authorList>
    </citation>
    <scope>PROTEIN SEQUENCE OF 2-12; 179-205 AND 528-536</scope>
    <scope>CLEAVAGE OF INITIATOR METHIONINE</scope>
    <scope>ACETYLATION AT SER-2</scope>
    <scope>IDENTIFICATION BY MASS SPECTROMETRY</scope>
    <source>
        <tissue>Lung carcinoma</tissue>
        <tissue>Ovarian carcinoma</tissue>
    </source>
</reference>
<reference key="9">
    <citation type="journal article" date="2005" name="Nat. Biotechnol.">
        <title>Immunoaffinity profiling of tyrosine phosphorylation in cancer cells.</title>
        <authorList>
            <person name="Rush J."/>
            <person name="Moritz A."/>
            <person name="Lee K.A."/>
            <person name="Guo A."/>
            <person name="Goss V.L."/>
            <person name="Spek E.J."/>
            <person name="Zhang H."/>
            <person name="Zha X.-M."/>
            <person name="Polakiewicz R.D."/>
            <person name="Comb M.J."/>
        </authorList>
    </citation>
    <scope>IDENTIFICATION BY MASS SPECTROMETRY [LARGE SCALE ANALYSIS]</scope>
</reference>
<reference key="10">
    <citation type="journal article" date="2006" name="Nat. Biotechnol.">
        <title>A probability-based approach for high-throughput protein phosphorylation analysis and site localization.</title>
        <authorList>
            <person name="Beausoleil S.A."/>
            <person name="Villen J."/>
            <person name="Gerber S.A."/>
            <person name="Rush J."/>
            <person name="Gygi S.P."/>
        </authorList>
    </citation>
    <scope>PHOSPHORYLATION [LARGE SCALE ANALYSIS] AT SER-39</scope>
    <scope>IDENTIFICATION BY MASS SPECTROMETRY [LARGE SCALE ANALYSIS]</scope>
    <source>
        <tissue>Cervix carcinoma</tissue>
    </source>
</reference>
<reference key="11">
    <citation type="journal article" date="2008" name="Mol. Cell">
        <title>Kinase-selective enrichment enables quantitative phosphoproteomics of the kinome across the cell cycle.</title>
        <authorList>
            <person name="Daub H."/>
            <person name="Olsen J.V."/>
            <person name="Bairlein M."/>
            <person name="Gnad F."/>
            <person name="Oppermann F.S."/>
            <person name="Korner R."/>
            <person name="Greff Z."/>
            <person name="Keri G."/>
            <person name="Stemmann O."/>
            <person name="Mann M."/>
        </authorList>
    </citation>
    <scope>IDENTIFICATION BY MASS SPECTROMETRY [LARGE SCALE ANALYSIS]</scope>
    <source>
        <tissue>Cervix carcinoma</tissue>
    </source>
</reference>
<reference key="12">
    <citation type="journal article" date="2009" name="Anal. Chem.">
        <title>Lys-N and trypsin cover complementary parts of the phosphoproteome in a refined SCX-based approach.</title>
        <authorList>
            <person name="Gauci S."/>
            <person name="Helbig A.O."/>
            <person name="Slijper M."/>
            <person name="Krijgsveld J."/>
            <person name="Heck A.J."/>
            <person name="Mohammed S."/>
        </authorList>
    </citation>
    <scope>ACETYLATION [LARGE SCALE ANALYSIS] AT SER-2</scope>
    <scope>CLEAVAGE OF INITIATOR METHIONINE [LARGE SCALE ANALYSIS]</scope>
    <scope>IDENTIFICATION BY MASS SPECTROMETRY [LARGE SCALE ANALYSIS]</scope>
</reference>
<reference key="13">
    <citation type="journal article" date="2009" name="Science">
        <title>Lysine acetylation targets protein complexes and co-regulates major cellular functions.</title>
        <authorList>
            <person name="Choudhary C."/>
            <person name="Kumar C."/>
            <person name="Gnad F."/>
            <person name="Nielsen M.L."/>
            <person name="Rehman M."/>
            <person name="Walther T.C."/>
            <person name="Olsen J.V."/>
            <person name="Mann M."/>
        </authorList>
    </citation>
    <scope>IDENTIFICATION BY MASS SPECTROMETRY [LARGE SCALE ANALYSIS]</scope>
</reference>
<reference key="14">
    <citation type="journal article" date="2010" name="Sci. Signal.">
        <title>Quantitative phosphoproteomics reveals widespread full phosphorylation site occupancy during mitosis.</title>
        <authorList>
            <person name="Olsen J.V."/>
            <person name="Vermeulen M."/>
            <person name="Santamaria A."/>
            <person name="Kumar C."/>
            <person name="Miller M.L."/>
            <person name="Jensen L.J."/>
            <person name="Gnad F."/>
            <person name="Cox J."/>
            <person name="Jensen T.S."/>
            <person name="Nigg E.A."/>
            <person name="Brunak S."/>
            <person name="Mann M."/>
        </authorList>
    </citation>
    <scope>PHOSPHORYLATION [LARGE SCALE ANALYSIS] AT SER-39 AND SER-359</scope>
    <scope>IDENTIFICATION BY MASS SPECTROMETRY [LARGE SCALE ANALYSIS]</scope>
    <source>
        <tissue>Cervix carcinoma</tissue>
    </source>
</reference>
<reference key="15">
    <citation type="journal article" date="2011" name="BMC Syst. Biol.">
        <title>Initial characterization of the human central proteome.</title>
        <authorList>
            <person name="Burkard T.R."/>
            <person name="Planyavsky M."/>
            <person name="Kaupe I."/>
            <person name="Breitwieser F.P."/>
            <person name="Buerckstuemmer T."/>
            <person name="Bennett K.L."/>
            <person name="Superti-Furga G."/>
            <person name="Colinge J."/>
        </authorList>
    </citation>
    <scope>IDENTIFICATION BY MASS SPECTROMETRY [LARGE SCALE ANALYSIS]</scope>
</reference>
<reference key="16">
    <citation type="journal article" date="2011" name="Sci. Signal.">
        <title>System-wide temporal characterization of the proteome and phosphoproteome of human embryonic stem cell differentiation.</title>
        <authorList>
            <person name="Rigbolt K.T."/>
            <person name="Prokhorova T.A."/>
            <person name="Akimov V."/>
            <person name="Henningsen J."/>
            <person name="Johansen P.T."/>
            <person name="Kratchmarova I."/>
            <person name="Kassem M."/>
            <person name="Mann M."/>
            <person name="Olsen J.V."/>
            <person name="Blagoev B."/>
        </authorList>
    </citation>
    <scope>PHOSPHORYLATION [LARGE SCALE ANALYSIS] AT SER-394</scope>
    <scope>IDENTIFICATION BY MASS SPECTROMETRY [LARGE SCALE ANALYSIS]</scope>
</reference>
<reference key="17">
    <citation type="journal article" date="2012" name="Nature">
        <title>Topology of the human and mouse m6A RNA methylomes revealed by m6A-seq.</title>
        <authorList>
            <person name="Dominissini D."/>
            <person name="Moshitch-Moshkovitz S."/>
            <person name="Schwartz S."/>
            <person name="Salmon-Divon M."/>
            <person name="Ungar L."/>
            <person name="Osenberg S."/>
            <person name="Cesarkas K."/>
            <person name="Jacob-Hirsch J."/>
            <person name="Amariglio N."/>
            <person name="Kupiec M."/>
            <person name="Sorek R."/>
            <person name="Rechavi G."/>
        </authorList>
    </citation>
    <scope>RNA-BINDING</scope>
    <scope>FUNCTION</scope>
</reference>
<reference key="18">
    <citation type="journal article" date="2012" name="Proc. Natl. Acad. Sci. U.S.A.">
        <title>N-terminal acetylome analyses and functional insights of the N-terminal acetyltransferase NatB.</title>
        <authorList>
            <person name="Van Damme P."/>
            <person name="Lasa M."/>
            <person name="Polevoda B."/>
            <person name="Gazquez C."/>
            <person name="Elosegui-Artola A."/>
            <person name="Kim D.S."/>
            <person name="De Juan-Pardo E."/>
            <person name="Demeyer K."/>
            <person name="Hole K."/>
            <person name="Larrea E."/>
            <person name="Timmerman E."/>
            <person name="Prieto J."/>
            <person name="Arnesen T."/>
            <person name="Sherman F."/>
            <person name="Gevaert K."/>
            <person name="Aldabe R."/>
        </authorList>
    </citation>
    <scope>ACETYLATION [LARGE SCALE ANALYSIS] AT SER-2</scope>
    <scope>CLEAVAGE OF INITIATOR METHIONINE [LARGE SCALE ANALYSIS]</scope>
    <scope>IDENTIFICATION BY MASS SPECTROMETRY [LARGE SCALE ANALYSIS]</scope>
</reference>
<reference key="19">
    <citation type="journal article" date="2013" name="J. Proteome Res.">
        <title>Toward a comprehensive characterization of a human cancer cell phosphoproteome.</title>
        <authorList>
            <person name="Zhou H."/>
            <person name="Di Palma S."/>
            <person name="Preisinger C."/>
            <person name="Peng M."/>
            <person name="Polat A.N."/>
            <person name="Heck A.J."/>
            <person name="Mohammed S."/>
        </authorList>
    </citation>
    <scope>PHOSPHORYLATION [LARGE SCALE ANALYSIS] AT SER-2; SER-4; SER-5 AND SER-196</scope>
    <scope>IDENTIFICATION BY MASS SPECTROMETRY [LARGE SCALE ANALYSIS]</scope>
    <source>
        <tissue>Cervix carcinoma</tissue>
        <tissue>Erythroleukemia</tissue>
    </source>
</reference>
<reference key="20">
    <citation type="journal article" date="2014" name="Biochem. J.">
        <title>A novel protein, Pho92, has a conserved YTH domain and regulates phosphate metabolism by decreasing the mRNA stability of PHO4 in Saccharomyces cerevisiae.</title>
        <authorList>
            <person name="Kang H.J."/>
            <person name="Jeong S.J."/>
            <person name="Kim K.N."/>
            <person name="Baek I.J."/>
            <person name="Chang M."/>
            <person name="Kang C.M."/>
            <person name="Park Y.S."/>
            <person name="Yun C.W."/>
        </authorList>
    </citation>
    <scope>RNA-BINDING</scope>
</reference>
<reference key="21">
    <citation type="journal article" date="2014" name="Nature">
        <title>N-methyladenosine-dependent regulation of messenger RNA stability.</title>
        <authorList>
            <person name="Wang X."/>
            <person name="Lu Z."/>
            <person name="Gomez A."/>
            <person name="Hon G.C."/>
            <person name="Yue Y."/>
            <person name="Han D."/>
            <person name="Fu Y."/>
            <person name="Parisien M."/>
            <person name="Dai Q."/>
            <person name="Jia G."/>
            <person name="Ren B."/>
            <person name="Pan T."/>
            <person name="He C."/>
        </authorList>
    </citation>
    <scope>RNA-BINDING</scope>
    <scope>FUNCTION</scope>
    <scope>SUBCELLULAR LOCATION</scope>
</reference>
<reference key="22">
    <citation type="journal article" date="2015" name="Cell">
        <title>N(6)-methyladenosine modulates messenger RNA translation efficiency.</title>
        <authorList>
            <person name="Wang X."/>
            <person name="Zhao B.S."/>
            <person name="Roundtree I.A."/>
            <person name="Lu Z."/>
            <person name="Han D."/>
            <person name="Ma H."/>
            <person name="Weng X."/>
            <person name="Chen K."/>
            <person name="Shi H."/>
            <person name="He C."/>
        </authorList>
    </citation>
    <scope>FUNCTION</scope>
</reference>
<reference key="23">
    <citation type="journal article" date="2015" name="J. Biol. Chem.">
        <title>structural basis for the discriminative recognition of N6-methyladenosine RNA by the human YT521-B homology domain family of proteins.</title>
        <authorList>
            <person name="Xu C."/>
            <person name="Liu K."/>
            <person name="Ahmed H."/>
            <person name="Loppnau P."/>
            <person name="Schapira M."/>
            <person name="Min J."/>
        </authorList>
    </citation>
    <scope>FUNCTION</scope>
    <scope>RNA-BINDING</scope>
</reference>
<reference key="24">
    <citation type="journal article" date="2015" name="Nature">
        <title>Dynamic m(6)A mRNA methylation directs translational control of heat shock response.</title>
        <authorList>
            <person name="Zhou J."/>
            <person name="Wan J."/>
            <person name="Gao X."/>
            <person name="Zhang X."/>
            <person name="Jaffrey S.R."/>
            <person name="Qian S.B."/>
        </authorList>
    </citation>
    <scope>FUNCTION</scope>
    <scope>SUBCELLULAR LOCATION</scope>
    <scope>INDUCTION</scope>
</reference>
<reference key="25">
    <citation type="journal article" date="2016" name="Nat. Commun.">
        <title>YTHDF2 destabilizes m(6)A-containing RNA through direct recruitment of the CCR4-NOT deadenylase complex.</title>
        <authorList>
            <person name="Du H."/>
            <person name="Zhao Y."/>
            <person name="He J."/>
            <person name="Zhang Y."/>
            <person name="Xi H."/>
            <person name="Liu M."/>
            <person name="Ma J."/>
            <person name="Wu L."/>
        </authorList>
    </citation>
    <scope>FUNCTION</scope>
    <scope>INTERACTION WITH CNOT1</scope>
</reference>
<reference key="26">
    <citation type="journal article" date="2017" name="Cell Res.">
        <title>YTHDF3 facilitates translation and decay of N(6)-methyladenosine-modified RNA.</title>
        <authorList>
            <person name="Shi H."/>
            <person name="Wang X."/>
            <person name="Lu Z."/>
            <person name="Zhao B.S."/>
            <person name="Ma H."/>
            <person name="Hsu P.J."/>
            <person name="Liu C."/>
            <person name="He C."/>
        </authorList>
    </citation>
    <scope>INTERACTION WITH YTHDF3</scope>
</reference>
<reference key="27">
    <citation type="journal article" date="2018" name="Cell Rep.">
        <title>Circadian clock regulation of hepatic lipid metabolism by modulation of m6A mRNA methylation.</title>
        <authorList>
            <person name="Zhong X."/>
            <person name="Yu J."/>
            <person name="Frazier K."/>
            <person name="Weng X."/>
            <person name="Li Y."/>
            <person name="Cham C.M."/>
            <person name="Dolan K."/>
            <person name="Zhu X."/>
            <person name="Hubert N."/>
            <person name="Tao Y."/>
            <person name="Lin F."/>
            <person name="Martinez-Guryn K."/>
            <person name="Huang Y."/>
            <person name="Wang T."/>
            <person name="Liu J."/>
            <person name="He C."/>
            <person name="Chang E.B."/>
            <person name="Leone V."/>
        </authorList>
    </citation>
    <scope>FUNCTION</scope>
</reference>
<reference key="28">
    <citation type="journal article" date="2018" name="Cell Res.">
        <title>Suppression of m6A reader Ythdf2 promotes hematopoietic stem cell expansion.</title>
        <authorList>
            <person name="Li Z."/>
            <person name="Qian P."/>
            <person name="Shao W."/>
            <person name="Shi H."/>
            <person name="He X.C."/>
            <person name="Gogol M."/>
            <person name="Yu Z."/>
            <person name="Wang Y."/>
            <person name="Qi M."/>
            <person name="Zhu Y."/>
            <person name="Perry J.M."/>
            <person name="Zhang K."/>
            <person name="Tao F."/>
            <person name="Zhou K."/>
            <person name="Hu D."/>
            <person name="Han Y."/>
            <person name="Zhao C."/>
            <person name="Alexander R."/>
            <person name="Xu H."/>
            <person name="Chen S."/>
            <person name="Peak A."/>
            <person name="Hall K."/>
            <person name="Peterson M."/>
            <person name="Perera A."/>
            <person name="Haug J.S."/>
            <person name="Parmely T."/>
            <person name="Li H."/>
            <person name="Shen B."/>
            <person name="Zeitlinger J."/>
            <person name="He C."/>
            <person name="Li L."/>
        </authorList>
    </citation>
    <scope>FUNCTION</scope>
</reference>
<reference key="29">
    <citation type="journal article" date="2018" name="Nat. Microbiol.">
        <title>Viral and cellular N6-methyladenosine and N6,2'-O-dimethyladenosine epitranscriptomes in the KSHV life cycle.</title>
        <authorList>
            <person name="Tan B."/>
            <person name="Liu H."/>
            <person name="Zhang S."/>
            <person name="da Silva S.R."/>
            <person name="Zhang L."/>
            <person name="Meng J."/>
            <person name="Cui X."/>
            <person name="Yuan H."/>
            <person name="Sorel O."/>
            <person name="Zhang S.W."/>
            <person name="Huang Y."/>
            <person name="Gao S.J."/>
        </authorList>
    </citation>
    <scope>CAUTION</scope>
</reference>
<reference key="30">
    <citation type="journal article" date="2018" name="PLoS Pathog.">
        <title>Addition of m6A to SV40 late mRNAs enhances viral structural gene expression and replication.</title>
        <authorList>
            <person name="Tsai K."/>
            <person name="Courtney D.G."/>
            <person name="Cullen B.R."/>
        </authorList>
    </citation>
    <scope>FUNCTION (MICROBIAL INFECTION)</scope>
    <scope>CAUTION</scope>
</reference>
<reference key="31">
    <citation type="journal article" date="2018" name="PLoS Pathog.">
        <title>N6-methyladenosine modification and the YTHDF2 reader protein play cell type specific roles in lytic viral gene expression during Kaposi's sarcoma-associated herpesvirus infection.</title>
        <authorList>
            <person name="Hesser C.R."/>
            <person name="Karijolich J."/>
            <person name="Dominissini D."/>
            <person name="He C."/>
            <person name="Glaunsinger B.A."/>
        </authorList>
    </citation>
    <scope>FUNCTION (MICROBIAL INFECTION)</scope>
    <scope>CAUTION</scope>
</reference>
<reference key="32">
    <citation type="journal article" date="2019" name="Cell Res.">
        <title>Multivalent m6A motifs promote phase separation of YTHDF proteins.</title>
        <authorList>
            <person name="Gao Y."/>
            <person name="Pei G."/>
            <person name="Li D."/>
            <person name="Li R."/>
            <person name="Shao Y."/>
            <person name="Zhang Q.C."/>
            <person name="Li P."/>
        </authorList>
    </citation>
    <scope>FUNCTION</scope>
    <scope>MUTAGENESIS OF TRP-432 AND TRP-486</scope>
</reference>
<reference key="33">
    <citation type="journal article" date="2019" name="Mol. Cell">
        <title>Endoribonucleolytic cleavage of m6A-containing RNAs by RNase P/MRP complex.</title>
        <authorList>
            <person name="Park O.H."/>
            <person name="Ha H."/>
            <person name="Lee Y."/>
            <person name="Boo S.H."/>
            <person name="Kwon D.H."/>
            <person name="Song H.K."/>
            <person name="Kim Y.K."/>
        </authorList>
    </citation>
    <scope>FUNCTION</scope>
    <scope>INTERACTION WITH RIDA</scope>
</reference>
<reference key="34">
    <citation type="journal article" date="2019" name="Nature">
        <title>m6A enhances the phase separation potential of mRNA.</title>
        <authorList>
            <person name="Ries R.J."/>
            <person name="Zaccara S."/>
            <person name="Klein P."/>
            <person name="Olarerin-George A."/>
            <person name="Namkoong S."/>
            <person name="Pickering B.F."/>
            <person name="Patil D.P."/>
            <person name="Kwak H."/>
            <person name="Lee J.H."/>
            <person name="Jaffrey S.R."/>
        </authorList>
    </citation>
    <scope>FUNCTION</scope>
    <scope>SUBCELLULAR LOCATION</scope>
    <scope>DOMAIN</scope>
    <scope>MUTAGENESIS OF TRP-432</scope>
</reference>
<reference key="35">
    <citation type="journal article" date="2019" name="Nat. Immunol.">
        <title>m6A modification controls the innate immune response to infection by targeting type I interferons.</title>
        <authorList>
            <person name="Winkler R."/>
            <person name="Gillis E."/>
            <person name="Lasman L."/>
            <person name="Safra M."/>
            <person name="Geula S."/>
            <person name="Soyris C."/>
            <person name="Nachshon A."/>
            <person name="Tai-Schmiedel J."/>
            <person name="Friedman N."/>
            <person name="Le-Trilling V.T.K."/>
            <person name="Trilling M."/>
            <person name="Mandelboim M."/>
            <person name="Hanna J.H."/>
            <person name="Schwartz S."/>
            <person name="Stern-Ginossar N."/>
        </authorList>
    </citation>
    <scope>FUNCTION</scope>
    <scope>CAUTION</scope>
</reference>
<reference key="36">
    <citation type="journal article" date="2020" name="Anal. Chem.">
        <title>YTHDF2 binds to 5-methylcytosine in RNA and modulates the maturation of ribosomal RNA.</title>
        <authorList>
            <person name="Dai X."/>
            <person name="Gonzalez G."/>
            <person name="Li L."/>
            <person name="Li J."/>
            <person name="You C."/>
            <person name="Miao W."/>
            <person name="Hu J."/>
            <person name="Fu L."/>
            <person name="Zhao Y."/>
            <person name="Li R."/>
            <person name="Li L."/>
            <person name="Chen X."/>
            <person name="Xu Y."/>
            <person name="Gu W."/>
            <person name="Wang Y."/>
        </authorList>
    </citation>
    <scope>FUNCTION</scope>
    <scope>MUTAGENESIS OF TRP-342</scope>
</reference>
<reference key="37">
    <citation type="journal article" date="2020" name="Cell">
        <title>A unified model for the function of YTHDF proteins in regulating m6A-modified mRNA.</title>
        <authorList>
            <person name="Zaccara S."/>
            <person name="Jaffrey S.R."/>
        </authorList>
    </citation>
    <scope>FUNCTION</scope>
    <scope>SUBCELLULAR LOCATION</scope>
    <scope>INTERACTION WITH THE CCR4-NOT COMPLEX</scope>
</reference>
<reference key="38">
    <citation type="journal article" date="2020" name="Nat. Chem. Biol.">
        <title>m6A-binding YTHDF proteins promote stress granule formation.</title>
        <authorList>
            <person name="Fu Y."/>
            <person name="Zhuang X."/>
        </authorList>
    </citation>
    <scope>FUNCTION</scope>
    <scope>SUBCELLULAR LOCATION</scope>
</reference>
<reference key="39">
    <citation type="journal article" date="2020" name="PLoS Biol.">
        <title>YTHDF2 promotes mitotic entry and is regulated by cell cycle mediators.</title>
        <authorList>
            <person name="Fei Q."/>
            <person name="Zou Z."/>
            <person name="Roundtree I.A."/>
            <person name="Sun H.L."/>
            <person name="He C."/>
        </authorList>
    </citation>
    <scope>FUNCTION</scope>
    <scope>UBIQUITINATION</scope>
</reference>
<reference key="40">
    <citation type="journal article" date="2020" name="Protein Cell">
        <title>Binding to m6A RNA promotes YTHDF2-mediated phase separation.</title>
        <authorList>
            <person name="Wang J."/>
            <person name="Wang L."/>
            <person name="Diao J."/>
            <person name="Shi Y.G."/>
            <person name="Shi Y."/>
            <person name="Ma H."/>
            <person name="Shen H."/>
        </authorList>
    </citation>
    <scope>FUNCTION</scope>
</reference>
<reference key="41">
    <citation type="journal article" date="2020" name="RNA">
        <title>YTHDF2 destabilizes m6A-modified neural-specific RNAs to restrain differentiation in induced pluripotent stem cells.</title>
        <authorList>
            <person name="Heck A.M."/>
            <person name="Russo J."/>
            <person name="Wilusz J."/>
            <person name="Nishimura E.O."/>
            <person name="Wilusz C.J."/>
        </authorList>
    </citation>
    <scope>FUNCTION</scope>
    <scope>TISSUE SPECIFICITY</scope>
</reference>
<reference key="42">
    <citation type="journal article" date="2014" name="Cell Res.">
        <title>Structure of the YTH domain of human YTHDF2 in complex with an m(6)A mononucleotide reveals an aromatic cage for m(6)A recognition.</title>
        <authorList>
            <person name="Li F."/>
            <person name="Zhao D."/>
            <person name="Wu J."/>
            <person name="Shi Y."/>
        </authorList>
    </citation>
    <scope>X-RAY CRYSTALLOGRAPHY (2.10 ANGSTROMS) OF 408-552 IN COMPLEX WITH N6-METHYLADENOSINE (M6A)-CONTAINING RNA</scope>
    <scope>MUTAGENESIS OF TRP-432; TRP-486 AND TRP-491</scope>
</reference>
<reference key="43">
    <citation type="journal article" date="2014" name="Cell Res.">
        <title>Crystal structure of the YTH domain of YTHDF2 reveals mechanism for recognition of N6-methyladenosine.</title>
        <authorList>
            <person name="Zhu T."/>
            <person name="Roundtree I.A."/>
            <person name="Wang P."/>
            <person name="Wang X."/>
            <person name="Wang L."/>
            <person name="Sun C."/>
            <person name="Tian Y."/>
            <person name="Li J."/>
            <person name="He C."/>
            <person name="Xu Y."/>
        </authorList>
    </citation>
    <scope>X-RAY CRYSTALLOGRAPHY (2.12 ANGSTROMS) OF 383-553</scope>
    <scope>FUNCTION</scope>
    <scope>RNA-BINDING</scope>
    <scope>MUTAGENESIS OF ARG-411; LYS-416; TRP-432; ARG-441; TRP-486 AND ARG-527</scope>
</reference>
<evidence type="ECO:0000250" key="1">
    <source>
        <dbReference type="UniProtKB" id="Q7Z739"/>
    </source>
</evidence>
<evidence type="ECO:0000250" key="2">
    <source>
        <dbReference type="UniProtKB" id="Q91YT7"/>
    </source>
</evidence>
<evidence type="ECO:0000255" key="3">
    <source>
        <dbReference type="PROSITE-ProRule" id="PRU00225"/>
    </source>
</evidence>
<evidence type="ECO:0000256" key="4">
    <source>
        <dbReference type="SAM" id="MobiDB-lite"/>
    </source>
</evidence>
<evidence type="ECO:0000269" key="5">
    <source>
    </source>
</evidence>
<evidence type="ECO:0000269" key="6">
    <source>
    </source>
</evidence>
<evidence type="ECO:0000269" key="7">
    <source>
    </source>
</evidence>
<evidence type="ECO:0000269" key="8">
    <source>
    </source>
</evidence>
<evidence type="ECO:0000269" key="9">
    <source>
    </source>
</evidence>
<evidence type="ECO:0000269" key="10">
    <source>
    </source>
</evidence>
<evidence type="ECO:0000269" key="11">
    <source>
    </source>
</evidence>
<evidence type="ECO:0000269" key="12">
    <source>
    </source>
</evidence>
<evidence type="ECO:0000269" key="13">
    <source>
    </source>
</evidence>
<evidence type="ECO:0000269" key="14">
    <source>
    </source>
</evidence>
<evidence type="ECO:0000269" key="15">
    <source>
    </source>
</evidence>
<evidence type="ECO:0000269" key="16">
    <source>
    </source>
</evidence>
<evidence type="ECO:0000269" key="17">
    <source>
    </source>
</evidence>
<evidence type="ECO:0000269" key="18">
    <source>
    </source>
</evidence>
<evidence type="ECO:0000269" key="19">
    <source>
    </source>
</evidence>
<evidence type="ECO:0000269" key="20">
    <source>
    </source>
</evidence>
<evidence type="ECO:0000269" key="21">
    <source>
    </source>
</evidence>
<evidence type="ECO:0000269" key="22">
    <source>
    </source>
</evidence>
<evidence type="ECO:0000269" key="23">
    <source>
    </source>
</evidence>
<evidence type="ECO:0000269" key="24">
    <source>
    </source>
</evidence>
<evidence type="ECO:0000269" key="25">
    <source>
    </source>
</evidence>
<evidence type="ECO:0000269" key="26">
    <source>
    </source>
</evidence>
<evidence type="ECO:0000269" key="27">
    <source>
    </source>
</evidence>
<evidence type="ECO:0000269" key="28">
    <source>
    </source>
</evidence>
<evidence type="ECO:0000269" key="29">
    <source ref="8"/>
</evidence>
<evidence type="ECO:0000303" key="30">
    <source>
    </source>
</evidence>
<evidence type="ECO:0000303" key="31">
    <source>
    </source>
</evidence>
<evidence type="ECO:0000303" key="32">
    <source>
    </source>
</evidence>
<evidence type="ECO:0000303" key="33">
    <source>
    </source>
</evidence>
<evidence type="ECO:0000303" key="34">
    <source>
    </source>
</evidence>
<evidence type="ECO:0000303" key="35">
    <source ref="2"/>
</evidence>
<evidence type="ECO:0000303" key="36">
    <source ref="3"/>
</evidence>
<evidence type="ECO:0000305" key="37"/>
<evidence type="ECO:0000312" key="38">
    <source>
        <dbReference type="HGNC" id="HGNC:31675"/>
    </source>
</evidence>
<evidence type="ECO:0007744" key="39">
    <source>
        <dbReference type="PDB" id="4RDN"/>
    </source>
</evidence>
<evidence type="ECO:0007744" key="40">
    <source>
    </source>
</evidence>
<evidence type="ECO:0007744" key="41">
    <source>
    </source>
</evidence>
<evidence type="ECO:0007744" key="42">
    <source>
    </source>
</evidence>
<evidence type="ECO:0007744" key="43">
    <source>
    </source>
</evidence>
<evidence type="ECO:0007744" key="44">
    <source>
    </source>
</evidence>
<evidence type="ECO:0007744" key="45">
    <source>
    </source>
</evidence>
<evidence type="ECO:0007829" key="46">
    <source>
        <dbReference type="PDB" id="7R5L"/>
    </source>
</evidence>
<evidence type="ECO:0007829" key="47">
    <source>
        <dbReference type="PDB" id="7Z8W"/>
    </source>
</evidence>
<evidence type="ECO:0007829" key="48">
    <source>
        <dbReference type="PDB" id="7Z92"/>
    </source>
</evidence>
<accession>Q9Y5A9</accession>
<accession>A6NKG4</accession>
<accession>A8K966</accession>
<accession>B4E1G7</accession>
<accession>D3DPM8</accession>
<accession>Q5VSZ9</accession>
<accession>Q8TDH0</accession>
<accession>Q9BUJ5</accession>
<proteinExistence type="evidence at protein level"/>
<comment type="function">
    <text evidence="2 5 6 7 8 9 10 11 12 13 17 18 19 20 21 22 23 24 25 26 27 28">Specifically recognizes and binds N6-methyladenosine (m6A)-containing RNAs, and regulates their stability (PubMed:24284625, PubMed:26046440, PubMed:26318451, PubMed:32492408). M6A is a modification present at internal sites of mRNAs and some non-coding RNAs and plays a role in mRNA stability and processing (PubMed:22575960, PubMed:24284625, PubMed:25412658, PubMed:25412661, PubMed:32492408). Acts as a regulator of mRNA stability by promoting degradation of m6A-containing mRNAs via interaction with the CCR4-NOT and ribonuclease P/MRP complexes, depending on the context (PubMed:24284625, PubMed:26046440, PubMed:27558897, PubMed:30930054, PubMed:32492408). The YTHDF paralogs (YTHDF1, YTHDF2 and YTHDF3) share m6A-containing mRNAs targets and act redundantly to mediate mRNA degradation and cellular differentiation (PubMed:28106072, PubMed:32492408). M6A-containing mRNAs containing a binding site for RIDA/HRSP12 (5'-GGUUC-3') are preferentially degraded by endoribonucleolytic cleavage: cooperative binding of RIDA/HRSP12 and YTHDF2 to transcripts leads to recruitment of the ribonuclease P/MRP complex (PubMed:30930054). Other m6A-containing mRNAs undergo deadenylation via direct interaction between YTHDF2 and CNOT1, leading to recruitment of the CCR4-NOT and subsequent deadenylation of m6A-containing mRNAs (PubMed:27558897). Required maternally to regulate oocyte maturation: probably acts by binding to m6A-containing mRNAs, thereby regulating maternal transcript dosage during oocyte maturation, which is essential for the competence of oocytes to sustain early zygotic development (By similarity). Also required during spermatogenesis: regulates spermagonial adhesion by promoting degradation of m6A-containing transcripts coding for matrix metallopeptidases (By similarity). Also involved in hematopoietic stem cells specification by binding to m6A-containing mRNAs, leading to promote their degradation (PubMed:30065315). Also acts as a regulator of neural development by promoting m6A-dependent degradation of neural development-related mRNA targets (By similarity). Inhibits neural specification of induced pluripotent stem cells by binding to methylated neural-specific mRNAs and promoting their degradation, thereby restraining neural differentiation (PubMed:32169943). Regulates circadian regulation of hepatic lipid metabolism: acts by promoting m6A-dependent degradation of PPARA transcripts (PubMed:30428350). Regulates the innate immune response to infection by inhibiting the type I interferon response: acts by binding to m6A-containing IFNB transcripts and promoting their degradation (PubMed:30559377). May also act as a promoter of cap-independent mRNA translation following heat shock stress: upon stress, relocalizes to the nucleus and specifically binds mRNAs with some m6A methylation mark at their 5'-UTR, protecting demethylation of mRNAs by FTO, thereby promoting cap-independent mRNA translation (PubMed:26458103). Regulates mitotic entry by promoting the phase-specific m6A-dependent degradation of WEE1 transcripts (PubMed:32267835). Promotes formation of phase-separated membraneless compartments, such as P-bodies or stress granules, by undergoing liquid-liquid phase separation upon binding to mRNAs containing multiple m6A-modified residues: polymethylated mRNAs act as a multivalent scaffold for the binding of YTHDF proteins, juxtaposing their disordered regions and thereby leading to phase separation (PubMed:31292544, PubMed:31388144, PubMed:31642031, PubMed:32451507). The resulting mRNA-YTHDF complexes then partition into different endogenous phase-separated membraneless compartments, such as P-bodies, stress granules or neuronal RNA granules (PubMed:31292544). May also recognize and bind RNAs modified by C5-methylcytosine (m5C) and act as a regulator of rRNA processing (PubMed:31815440).</text>
</comment>
<comment type="function">
    <text evidence="15">(Microbial infection) Promotes viral gene expression and replication of polyomavirus SV40: acts by binding to N6-methyladenosine (m6A)-containing viral RNAs (PubMed:29447282).</text>
</comment>
<comment type="function">
    <text evidence="16">(Microbial infection) Promotes viral gene expression and virion production of kaposis sarcoma-associated herpesvirus (KSHV) at some stage of the KSHV life cycle (in iSLK.219 and iSLK.BAC16 cells) (PubMed:29659627). Acts by binding to N6-methyladenosine (m6A)-containing viral RNAs (PubMed:29659627).</text>
</comment>
<comment type="subunit">
    <text evidence="12 13 20 28">Interacts with CNOT1; interaction is direct and promotes recruitment of the CCR4-NOT complex (PubMed:27558897, PubMed:32492408). Interacts with YTHDF3 (PubMed:28106072). Interacts with RIDA/HRSP12; interaction leads to recruitment of the ribonuclease P/MRP complex (PubMed:30930054).</text>
</comment>
<comment type="subcellular location">
    <subcellularLocation>
        <location evidence="11 21 28">Cytoplasm</location>
        <location evidence="11 21 28">Cytosol</location>
    </subcellularLocation>
    <subcellularLocation>
        <location evidence="6 21 28">Cytoplasm</location>
        <location evidence="6 21 28">P-body</location>
    </subcellularLocation>
    <subcellularLocation>
        <location evidence="21 27">Cytoplasm</location>
        <location evidence="21 27">Stress granule</location>
    </subcellularLocation>
    <subcellularLocation>
        <location evidence="11">Nucleus</location>
    </subcellularLocation>
    <text evidence="11 21">Localizes to the cytosol and relocates to the nucleus following heat shock stress (PubMed:26458103). Can partition into different structures: into P-bodies in unstressed cells, and into stress granules during stress (PubMed:31292544).</text>
</comment>
<comment type="alternative products">
    <event type="alternative splicing"/>
    <isoform>
        <id>Q9Y5A9-1</id>
        <name>1</name>
        <sequence type="displayed"/>
    </isoform>
    <isoform>
        <id>Q9Y5A9-2</id>
        <name>2</name>
        <sequence type="described" ref="VSP_009297"/>
    </isoform>
</comment>
<comment type="tissue specificity">
    <text evidence="25">Highly expressed in induced pluripotent stem cells (iPSCs) and down-regulated during neural differentiation.</text>
</comment>
<comment type="induction">
    <text evidence="11">Following heat shock stress.</text>
</comment>
<comment type="domain">
    <text evidence="21">The disordered regions have the ability to interact with each other and to 'phase separate' into liquid droplets within the cytosol following binding to mRNAs containing multiple m6A-modified residues (PubMed:31292544). This leads to the partition of m6A-containing mRNAs into membraneless compartments, where mRNAs may be stored, degraded or used to transport mRNAs to dendritic arbors in neurons (PubMed:31292544).</text>
</comment>
<comment type="PTM">
    <text evidence="26">Ubiquitinated by the SCF(SKP2) complex, leading to its degradation.</text>
</comment>
<comment type="similarity">
    <text evidence="37">Belongs to the YTHDF family. YTHDF2 subfamily.</text>
</comment>
<comment type="caution">
    <text evidence="14 15 16 19">The role of YTHDF2 and N6-methyladenosine (m6A) in virus expression and replication is unclear (PubMed:29109479, PubMed:29447282, PubMed:29659627, PubMed:30559377). According to some reports, YTHDF2 promotes viral gene expression and replication of polyomavirus SV40 and herpesvirus (KSHV) by binding to N6-methyladenosine (m6A)-containing viral RNAs (PubMed:29447282, PubMed:29659627). Another report however suggests that YTHDF2 regulates virus expression and replication indirectly, via its ability to inhibit the type I interferon response, thereby promoting virus expression (PubMed:30559377). Indirect regulation via inhibition of type I interferon response might explain why contradictory results have been reported for its role in KSHV virus replication (PubMed:29109479, PubMed:29659627).</text>
</comment>
<comment type="caution">
    <text evidence="9 28">Previous studies suggested the 3 different paralogs (YTHDF1, YTHDF2 and YTHDF3) have unique functions with limited redundancy (PubMed:26046440). However, later studies showed that YTHDF1, YTHDF2 and YTHDF3 paralogs have redundant functions to a profound extent and directly promote degradation of m6A-containing mRNAs (PubMed:32492408).</text>
</comment>
<comment type="sequence caution" evidence="37">
    <conflict type="frameshift">
        <sequence resource="EMBL-CDS" id="AAD42861"/>
    </conflict>
</comment>
<comment type="sequence caution" evidence="37">
    <conflict type="frameshift">
        <sequence resource="EMBL-CDS" id="AAF08813"/>
    </conflict>
</comment>
<comment type="sequence caution" evidence="37">
    <conflict type="miscellaneous discrepancy">
        <sequence resource="EMBL-CDS" id="AAL99921"/>
    </conflict>
</comment>
<comment type="online information" name="Protein Spotlight">
    <link uri="https://www.proteinspotlight.org/back_issues/238/"/>
    <text>On the benefits of disorder - Issue 238 of August 2021</text>
</comment>
<gene>
    <name evidence="32 38" type="primary">YTHDF2</name>
    <name evidence="35" type="synonym">HGRG8</name>
</gene>
<keyword id="KW-0002">3D-structure</keyword>
<keyword id="KW-0007">Acetylation</keyword>
<keyword id="KW-0025">Alternative splicing</keyword>
<keyword id="KW-0131">Cell cycle</keyword>
<keyword id="KW-0132">Cell division</keyword>
<keyword id="KW-0963">Cytoplasm</keyword>
<keyword id="KW-0221">Differentiation</keyword>
<keyword id="KW-0903">Direct protein sequencing</keyword>
<keyword id="KW-0945">Host-virus interaction</keyword>
<keyword id="KW-0391">Immunity</keyword>
<keyword id="KW-0399">Innate immunity</keyword>
<keyword id="KW-0498">Mitosis</keyword>
<keyword id="KW-0539">Nucleus</keyword>
<keyword id="KW-0896">Oogenesis</keyword>
<keyword id="KW-0597">Phosphoprotein</keyword>
<keyword id="KW-1267">Proteomics identification</keyword>
<keyword id="KW-1185">Reference proteome</keyword>
<keyword id="KW-0694">RNA-binding</keyword>
<keyword id="KW-0744">Spermatogenesis</keyword>
<keyword id="KW-0832">Ubl conjugation</keyword>
<organism>
    <name type="scientific">Homo sapiens</name>
    <name type="common">Human</name>
    <dbReference type="NCBI Taxonomy" id="9606"/>
    <lineage>
        <taxon>Eukaryota</taxon>
        <taxon>Metazoa</taxon>
        <taxon>Chordata</taxon>
        <taxon>Craniata</taxon>
        <taxon>Vertebrata</taxon>
        <taxon>Euteleostomi</taxon>
        <taxon>Mammalia</taxon>
        <taxon>Eutheria</taxon>
        <taxon>Euarchontoglires</taxon>
        <taxon>Primates</taxon>
        <taxon>Haplorrhini</taxon>
        <taxon>Catarrhini</taxon>
        <taxon>Hominidae</taxon>
        <taxon>Homo</taxon>
    </lineage>
</organism>
<sequence length="579" mass="62334">MSASSLLEQRPKGQGNKVQNGSVHQKDGLNDDDFEPYLSPQARPNNAYTAMSDSYLPSYYSPSIGFSYSLGEAAWSTGGDTAMPYLTSYGQLSNGEPHFLPDAMFGQPGALGSTPFLGQHGFNFFPSGIDFSAWGNNSSQGQSTQSSGYSSNYAYAPSSLGGAMIDGQSAFANETLNKAPGMNTIDQGMAALKLGSTEVASNVPKVVGSAVGSGSITSNIVASNSLPPATIAPPKPASWADIASKPAKQQPKLKTKNGIAGSSLPPPPIKHNMDIGTWDNKGPVAKAPSQALVQNIGQPTQGSPQPVGQQANNSPPVAQASVGQQTQPLPPPPPQPAQLSVQQQAAQPTRWVAPRNRGSGFGHNGVDGNGVGQSQAGSGSTPSEPHPVLEKLRSINNYNPKDFDWNLKHGRVFIIKSYSEDDIHRSIKYNIWCSTEHGNKRLDAAYRSMNGKGPVYLLFSVNGSGHFCGVAEMKSAVDYNTCAGVWSQDKWKGRFDVRWIFVKDVPNSQLRHIRLENNENKPVTNSRDTQEVPLEKAKQVLKIIASYKHTTSIFDDFSHYEKRQEEEESVKKERQGRGK</sequence>